<dbReference type="EC" id="3.6.4.13" evidence="1"/>
<dbReference type="EMBL" id="CP000880">
    <property type="protein sequence ID" value="ABX23538.1"/>
    <property type="molecule type" value="Genomic_DNA"/>
</dbReference>
<dbReference type="SMR" id="A9MJ29"/>
<dbReference type="STRING" id="41514.SARI_03738"/>
<dbReference type="KEGG" id="ses:SARI_03738"/>
<dbReference type="HOGENOM" id="CLU_003041_1_3_6"/>
<dbReference type="Proteomes" id="UP000002084">
    <property type="component" value="Chromosome"/>
</dbReference>
<dbReference type="GO" id="GO:0005829">
    <property type="term" value="C:cytosol"/>
    <property type="evidence" value="ECO:0007669"/>
    <property type="project" value="TreeGrafter"/>
</dbReference>
<dbReference type="GO" id="GO:0005524">
    <property type="term" value="F:ATP binding"/>
    <property type="evidence" value="ECO:0007669"/>
    <property type="project" value="UniProtKB-UniRule"/>
</dbReference>
<dbReference type="GO" id="GO:0016887">
    <property type="term" value="F:ATP hydrolysis activity"/>
    <property type="evidence" value="ECO:0007669"/>
    <property type="project" value="RHEA"/>
</dbReference>
<dbReference type="GO" id="GO:0003723">
    <property type="term" value="F:RNA binding"/>
    <property type="evidence" value="ECO:0007669"/>
    <property type="project" value="UniProtKB-UniRule"/>
</dbReference>
<dbReference type="GO" id="GO:0003724">
    <property type="term" value="F:RNA helicase activity"/>
    <property type="evidence" value="ECO:0007669"/>
    <property type="project" value="UniProtKB-UniRule"/>
</dbReference>
<dbReference type="GO" id="GO:0006401">
    <property type="term" value="P:RNA catabolic process"/>
    <property type="evidence" value="ECO:0007669"/>
    <property type="project" value="UniProtKB-UniRule"/>
</dbReference>
<dbReference type="CDD" id="cd00268">
    <property type="entry name" value="DEADc"/>
    <property type="match status" value="1"/>
</dbReference>
<dbReference type="CDD" id="cd18787">
    <property type="entry name" value="SF2_C_DEAD"/>
    <property type="match status" value="1"/>
</dbReference>
<dbReference type="FunFam" id="3.40.50.300:FF:000008">
    <property type="entry name" value="ATP-dependent RNA helicase RhlB"/>
    <property type="match status" value="1"/>
</dbReference>
<dbReference type="FunFam" id="3.40.50.300:FF:000312">
    <property type="entry name" value="ATP-dependent RNA helicase RhlB"/>
    <property type="match status" value="1"/>
</dbReference>
<dbReference type="Gene3D" id="3.40.50.300">
    <property type="entry name" value="P-loop containing nucleotide triphosphate hydrolases"/>
    <property type="match status" value="2"/>
</dbReference>
<dbReference type="HAMAP" id="MF_00661">
    <property type="entry name" value="DEAD_helicase_RhlB"/>
    <property type="match status" value="1"/>
</dbReference>
<dbReference type="InterPro" id="IPR011545">
    <property type="entry name" value="DEAD/DEAH_box_helicase_dom"/>
</dbReference>
<dbReference type="InterPro" id="IPR050079">
    <property type="entry name" value="DEAD_box_RNA_helicase"/>
</dbReference>
<dbReference type="InterPro" id="IPR014001">
    <property type="entry name" value="Helicase_ATP-bd"/>
</dbReference>
<dbReference type="InterPro" id="IPR001650">
    <property type="entry name" value="Helicase_C-like"/>
</dbReference>
<dbReference type="InterPro" id="IPR027417">
    <property type="entry name" value="P-loop_NTPase"/>
</dbReference>
<dbReference type="InterPro" id="IPR000629">
    <property type="entry name" value="RNA-helicase_DEAD-box_CS"/>
</dbReference>
<dbReference type="InterPro" id="IPR023554">
    <property type="entry name" value="RNA_helicase_ATP-dep_RhlB"/>
</dbReference>
<dbReference type="InterPro" id="IPR014014">
    <property type="entry name" value="RNA_helicase_DEAD_Q_motif"/>
</dbReference>
<dbReference type="NCBIfam" id="NF003419">
    <property type="entry name" value="PRK04837.1"/>
    <property type="match status" value="1"/>
</dbReference>
<dbReference type="PANTHER" id="PTHR47959:SF10">
    <property type="entry name" value="ATP-DEPENDENT RNA HELICASE RHLB"/>
    <property type="match status" value="1"/>
</dbReference>
<dbReference type="PANTHER" id="PTHR47959">
    <property type="entry name" value="ATP-DEPENDENT RNA HELICASE RHLE-RELATED"/>
    <property type="match status" value="1"/>
</dbReference>
<dbReference type="Pfam" id="PF00270">
    <property type="entry name" value="DEAD"/>
    <property type="match status" value="1"/>
</dbReference>
<dbReference type="Pfam" id="PF00271">
    <property type="entry name" value="Helicase_C"/>
    <property type="match status" value="1"/>
</dbReference>
<dbReference type="SMART" id="SM00487">
    <property type="entry name" value="DEXDc"/>
    <property type="match status" value="1"/>
</dbReference>
<dbReference type="SMART" id="SM00490">
    <property type="entry name" value="HELICc"/>
    <property type="match status" value="1"/>
</dbReference>
<dbReference type="SUPFAM" id="SSF52540">
    <property type="entry name" value="P-loop containing nucleoside triphosphate hydrolases"/>
    <property type="match status" value="1"/>
</dbReference>
<dbReference type="PROSITE" id="PS00039">
    <property type="entry name" value="DEAD_ATP_HELICASE"/>
    <property type="match status" value="1"/>
</dbReference>
<dbReference type="PROSITE" id="PS51192">
    <property type="entry name" value="HELICASE_ATP_BIND_1"/>
    <property type="match status" value="1"/>
</dbReference>
<dbReference type="PROSITE" id="PS51194">
    <property type="entry name" value="HELICASE_CTER"/>
    <property type="match status" value="1"/>
</dbReference>
<dbReference type="PROSITE" id="PS51195">
    <property type="entry name" value="Q_MOTIF"/>
    <property type="match status" value="1"/>
</dbReference>
<gene>
    <name evidence="1" type="primary">rhlB</name>
    <name type="ordered locus">SARI_03738</name>
</gene>
<keyword id="KW-0067">ATP-binding</keyword>
<keyword id="KW-0963">Cytoplasm</keyword>
<keyword id="KW-0347">Helicase</keyword>
<keyword id="KW-0378">Hydrolase</keyword>
<keyword id="KW-0547">Nucleotide-binding</keyword>
<keyword id="KW-1185">Reference proteome</keyword>
<keyword id="KW-0694">RNA-binding</keyword>
<organism>
    <name type="scientific">Salmonella arizonae (strain ATCC BAA-731 / CDC346-86 / RSK2980)</name>
    <dbReference type="NCBI Taxonomy" id="41514"/>
    <lineage>
        <taxon>Bacteria</taxon>
        <taxon>Pseudomonadati</taxon>
        <taxon>Pseudomonadota</taxon>
        <taxon>Gammaproteobacteria</taxon>
        <taxon>Enterobacterales</taxon>
        <taxon>Enterobacteriaceae</taxon>
        <taxon>Salmonella</taxon>
    </lineage>
</organism>
<feature type="chain" id="PRO_1000082852" description="ATP-dependent RNA helicase RhlB">
    <location>
        <begin position="1"/>
        <end position="421"/>
    </location>
</feature>
<feature type="domain" description="Helicase ATP-binding" evidence="1">
    <location>
        <begin position="40"/>
        <end position="219"/>
    </location>
</feature>
<feature type="domain" description="Helicase C-terminal" evidence="1">
    <location>
        <begin position="245"/>
        <end position="390"/>
    </location>
</feature>
<feature type="region of interest" description="Disordered" evidence="2">
    <location>
        <begin position="396"/>
        <end position="421"/>
    </location>
</feature>
<feature type="short sequence motif" description="Q motif">
    <location>
        <begin position="9"/>
        <end position="37"/>
    </location>
</feature>
<feature type="short sequence motif" description="DEAD box">
    <location>
        <begin position="165"/>
        <end position="168"/>
    </location>
</feature>
<feature type="compositionally biased region" description="Low complexity" evidence="2">
    <location>
        <begin position="402"/>
        <end position="414"/>
    </location>
</feature>
<feature type="binding site" evidence="1">
    <location>
        <begin position="53"/>
        <end position="60"/>
    </location>
    <ligand>
        <name>ATP</name>
        <dbReference type="ChEBI" id="CHEBI:30616"/>
    </ligand>
</feature>
<proteinExistence type="inferred from homology"/>
<reference key="1">
    <citation type="submission" date="2007-11" db="EMBL/GenBank/DDBJ databases">
        <authorList>
            <consortium name="The Salmonella enterica serovar Arizonae Genome Sequencing Project"/>
            <person name="McClelland M."/>
            <person name="Sanderson E.K."/>
            <person name="Porwollik S."/>
            <person name="Spieth J."/>
            <person name="Clifton W.S."/>
            <person name="Fulton R."/>
            <person name="Chunyan W."/>
            <person name="Wollam A."/>
            <person name="Shah N."/>
            <person name="Pepin K."/>
            <person name="Bhonagiri V."/>
            <person name="Nash W."/>
            <person name="Johnson M."/>
            <person name="Thiruvilangam P."/>
            <person name="Wilson R."/>
        </authorList>
    </citation>
    <scope>NUCLEOTIDE SEQUENCE [LARGE SCALE GENOMIC DNA]</scope>
    <source>
        <strain>ATCC BAA-731 / CDC346-86 / RSK2980</strain>
    </source>
</reference>
<accession>A9MJ29</accession>
<evidence type="ECO:0000255" key="1">
    <source>
        <dbReference type="HAMAP-Rule" id="MF_00661"/>
    </source>
</evidence>
<evidence type="ECO:0000256" key="2">
    <source>
        <dbReference type="SAM" id="MobiDB-lite"/>
    </source>
</evidence>
<protein>
    <recommendedName>
        <fullName evidence="1">ATP-dependent RNA helicase RhlB</fullName>
        <ecNumber evidence="1">3.6.4.13</ecNumber>
    </recommendedName>
</protein>
<name>RHLB_SALAR</name>
<comment type="function">
    <text evidence="1">DEAD-box RNA helicase involved in RNA degradation. Has RNA-dependent ATPase activity and unwinds double-stranded RNA.</text>
</comment>
<comment type="catalytic activity">
    <reaction evidence="1">
        <text>ATP + H2O = ADP + phosphate + H(+)</text>
        <dbReference type="Rhea" id="RHEA:13065"/>
        <dbReference type="ChEBI" id="CHEBI:15377"/>
        <dbReference type="ChEBI" id="CHEBI:15378"/>
        <dbReference type="ChEBI" id="CHEBI:30616"/>
        <dbReference type="ChEBI" id="CHEBI:43474"/>
        <dbReference type="ChEBI" id="CHEBI:456216"/>
        <dbReference type="EC" id="3.6.4.13"/>
    </reaction>
</comment>
<comment type="subunit">
    <text evidence="1">Component of the RNA degradosome, which is a multiprotein complex involved in RNA processing and mRNA degradation.</text>
</comment>
<comment type="subcellular location">
    <subcellularLocation>
        <location evidence="1">Cytoplasm</location>
    </subcellularLocation>
</comment>
<comment type="similarity">
    <text evidence="1">Belongs to the DEAD box helicase family. RhlB subfamily.</text>
</comment>
<sequence>MSKTHLTEQKFSDFALHPQVVEALEKKGFYNCTPIQALALPLTLAGRDVAGQAQTGTGKTMAFLTSTFHYLLSHPAIDDRKVNQPRALIMAPTRELAVQIHADAEPLAQVTGLKLGLAYGGDGYDKQLKVLESGVDILIGTTGRLIDYAKQNHINLGAIQVVVLDEADRMYDLGFIKDIRWLFRRMPPAAQRLNMLFSATLSYRVRELAFEQMNNAEYVEVEPEQKTGHRIKEELFYPSNEEKMRLLQTLIEEEWPDRAIIFANTKHRCEDIWGHLAADGHRVGLLTGDVAQKKRLRILDEFTRGDLDILVATDVAARGLHIPAVTHVFNYDLPDDCEDYVHRIGRTGRAGASGHSISLACEEYALNLPAIESYIGHSIPVSKYNPEALMTDLPKPLRLTRSRPGNGPRRAGAPRNRRRSG</sequence>